<protein>
    <recommendedName>
        <fullName>U4/U6.U5 small nuclear ribonucleoprotein 27 kDa protein</fullName>
        <shortName>U4/U6.U5 snRNP 27 kDa protein</shortName>
        <shortName>U4/U6.U5-27K</shortName>
    </recommendedName>
    <alternativeName>
        <fullName>U4/U6.U5 tri-snRNP-associated protein 3</fullName>
    </alternativeName>
</protein>
<dbReference type="EMBL" id="BC077690">
    <property type="protein sequence ID" value="AAH77690.1"/>
    <property type="molecule type" value="mRNA"/>
</dbReference>
<dbReference type="RefSeq" id="NP_001005142.1">
    <property type="nucleotide sequence ID" value="NM_001005142.1"/>
</dbReference>
<dbReference type="SMR" id="Q6DDA4"/>
<dbReference type="STRING" id="8364.ENSXETP00000026425"/>
<dbReference type="PaxDb" id="8364-ENSXETP00000018644"/>
<dbReference type="GeneID" id="448731"/>
<dbReference type="KEGG" id="xtr:448731"/>
<dbReference type="AGR" id="Xenbase:XB-GENE-1002864"/>
<dbReference type="CTD" id="11017"/>
<dbReference type="Xenbase" id="XB-GENE-1002864">
    <property type="gene designation" value="snrnp27"/>
</dbReference>
<dbReference type="eggNOG" id="KOG3263">
    <property type="taxonomic scope" value="Eukaryota"/>
</dbReference>
<dbReference type="HOGENOM" id="CLU_075596_2_1_1"/>
<dbReference type="InParanoid" id="Q6DDA4"/>
<dbReference type="OMA" id="VDSSTMW"/>
<dbReference type="OrthoDB" id="21368at2759"/>
<dbReference type="PhylomeDB" id="Q6DDA4"/>
<dbReference type="TreeFam" id="TF314458"/>
<dbReference type="Proteomes" id="UP000008143">
    <property type="component" value="Chromosome 3"/>
</dbReference>
<dbReference type="Bgee" id="ENSXETG00000008518">
    <property type="expression patterns" value="Expressed in 2-cell stage embryo and 15 other cell types or tissues"/>
</dbReference>
<dbReference type="ExpressionAtlas" id="Q6DDA4">
    <property type="expression patterns" value="baseline"/>
</dbReference>
<dbReference type="GO" id="GO:0005634">
    <property type="term" value="C:nucleus"/>
    <property type="evidence" value="ECO:0007669"/>
    <property type="project" value="UniProtKB-SubCell"/>
</dbReference>
<dbReference type="GO" id="GO:0006397">
    <property type="term" value="P:mRNA processing"/>
    <property type="evidence" value="ECO:0007669"/>
    <property type="project" value="UniProtKB-KW"/>
</dbReference>
<dbReference type="GO" id="GO:0008380">
    <property type="term" value="P:RNA splicing"/>
    <property type="evidence" value="ECO:0007669"/>
    <property type="project" value="UniProtKB-KW"/>
</dbReference>
<dbReference type="InterPro" id="IPR013957">
    <property type="entry name" value="SNRNP27"/>
</dbReference>
<dbReference type="PANTHER" id="PTHR31077">
    <property type="entry name" value="U4/U6.U5 SMALL NUCLEAR RIBONUCLEOPROTEIN 27 KDA PROTEIN"/>
    <property type="match status" value="1"/>
</dbReference>
<dbReference type="PANTHER" id="PTHR31077:SF1">
    <property type="entry name" value="U4_U6.U5 SMALL NUCLEAR RIBONUCLEOPROTEIN 27 KDA PROTEIN"/>
    <property type="match status" value="1"/>
</dbReference>
<dbReference type="Pfam" id="PF08648">
    <property type="entry name" value="SNRNP27"/>
    <property type="match status" value="1"/>
</dbReference>
<sequence length="156" mass="18717">MGRSRSRSPERRRERRRSRSASRERERRRRERSRSRERRRSRSRSPHRRRSRSPRRHRSSSISPGRLKDRRDDDKKDSKESKGAKERQIAAEDLEGKTEEEIEMMKMMGFATFDTSKGKKVDGSVNAYAINVSQKRKYRQYMNRKGGFNRPLDFIA</sequence>
<proteinExistence type="evidence at transcript level"/>
<reference key="1">
    <citation type="submission" date="2004-07" db="EMBL/GenBank/DDBJ databases">
        <authorList>
            <consortium name="NIH - Xenopus Gene Collection (XGC) project"/>
        </authorList>
    </citation>
    <scope>NUCLEOTIDE SEQUENCE [LARGE SCALE MRNA]</scope>
    <source>
        <tissue>Embryo</tissue>
    </source>
</reference>
<accession>Q6DDA4</accession>
<name>SNR27_XENTR</name>
<comment type="function">
    <text evidence="1">May play a role in mRNA splicing.</text>
</comment>
<comment type="subunit">
    <text evidence="1">Part of a tri-snRNP complex.</text>
</comment>
<comment type="subcellular location">
    <subcellularLocation>
        <location evidence="3">Nucleus</location>
    </subcellularLocation>
</comment>
<comment type="similarity">
    <text evidence="3">Belongs to the SNUT3 family.</text>
</comment>
<evidence type="ECO:0000250" key="1"/>
<evidence type="ECO:0000256" key="2">
    <source>
        <dbReference type="SAM" id="MobiDB-lite"/>
    </source>
</evidence>
<evidence type="ECO:0000305" key="3"/>
<gene>
    <name type="primary">snrnp27</name>
</gene>
<keyword id="KW-0507">mRNA processing</keyword>
<keyword id="KW-0508">mRNA splicing</keyword>
<keyword id="KW-0539">Nucleus</keyword>
<keyword id="KW-1185">Reference proteome</keyword>
<organism>
    <name type="scientific">Xenopus tropicalis</name>
    <name type="common">Western clawed frog</name>
    <name type="synonym">Silurana tropicalis</name>
    <dbReference type="NCBI Taxonomy" id="8364"/>
    <lineage>
        <taxon>Eukaryota</taxon>
        <taxon>Metazoa</taxon>
        <taxon>Chordata</taxon>
        <taxon>Craniata</taxon>
        <taxon>Vertebrata</taxon>
        <taxon>Euteleostomi</taxon>
        <taxon>Amphibia</taxon>
        <taxon>Batrachia</taxon>
        <taxon>Anura</taxon>
        <taxon>Pipoidea</taxon>
        <taxon>Pipidae</taxon>
        <taxon>Xenopodinae</taxon>
        <taxon>Xenopus</taxon>
        <taxon>Silurana</taxon>
    </lineage>
</organism>
<feature type="chain" id="PRO_0000223969" description="U4/U6.U5 small nuclear ribonucleoprotein 27 kDa protein">
    <location>
        <begin position="1"/>
        <end position="156"/>
    </location>
</feature>
<feature type="region of interest" description="Disordered" evidence="2">
    <location>
        <begin position="1"/>
        <end position="98"/>
    </location>
</feature>
<feature type="compositionally biased region" description="Basic residues" evidence="2">
    <location>
        <begin position="13"/>
        <end position="59"/>
    </location>
</feature>
<feature type="compositionally biased region" description="Basic and acidic residues" evidence="2">
    <location>
        <begin position="66"/>
        <end position="98"/>
    </location>
</feature>